<proteinExistence type="inferred from homology"/>
<sequence length="207" mass="22362">MLGRPKLVLASGSPRRLALLNQAGIEPDALRPADVDETPIRGELPRACANRLARAKAEAALQSIQLDDDLRGSYLLAADTVVAVGRRILPKAELTDEASQCLRLLSGRNHRVYTAVCLVTPKEAFRQRLVETRVRFKRLSEEDIAGYVGSGEWRGKAGGYAVQGIAGSFVVKLVGSYTNVVGLPLYETISLLGGEGFPIRHGWLNAG</sequence>
<evidence type="ECO:0000255" key="1">
    <source>
        <dbReference type="HAMAP-Rule" id="MF_00528"/>
    </source>
</evidence>
<evidence type="ECO:0000305" key="2"/>
<keyword id="KW-0963">Cytoplasm</keyword>
<keyword id="KW-0378">Hydrolase</keyword>
<keyword id="KW-0546">Nucleotide metabolism</keyword>
<feature type="chain" id="PRO_0000267401" description="dTTP/UTP pyrophosphatase">
    <location>
        <begin position="1"/>
        <end position="207"/>
    </location>
</feature>
<feature type="active site" description="Proton acceptor" evidence="1">
    <location>
        <position position="79"/>
    </location>
</feature>
<feature type="site" description="Important for substrate specificity" evidence="1">
    <location>
        <position position="15"/>
    </location>
</feature>
<feature type="site" description="Important for substrate specificity" evidence="1">
    <location>
        <position position="80"/>
    </location>
</feature>
<feature type="site" description="Important for substrate specificity" evidence="1">
    <location>
        <position position="163"/>
    </location>
</feature>
<reference key="1">
    <citation type="journal article" date="2004" name="Nat. Biotechnol.">
        <title>Complete genome sequence of the metabolically versatile photosynthetic bacterium Rhodopseudomonas palustris.</title>
        <authorList>
            <person name="Larimer F.W."/>
            <person name="Chain P."/>
            <person name="Hauser L."/>
            <person name="Lamerdin J.E."/>
            <person name="Malfatti S."/>
            <person name="Do L."/>
            <person name="Land M.L."/>
            <person name="Pelletier D.A."/>
            <person name="Beatty J.T."/>
            <person name="Lang A.S."/>
            <person name="Tabita F.R."/>
            <person name="Gibson J.L."/>
            <person name="Hanson T.E."/>
            <person name="Bobst C."/>
            <person name="Torres y Torres J.L."/>
            <person name="Peres C."/>
            <person name="Harrison F.H."/>
            <person name="Gibson J."/>
            <person name="Harwood C.S."/>
        </authorList>
    </citation>
    <scope>NUCLEOTIDE SEQUENCE [LARGE SCALE GENOMIC DNA]</scope>
    <source>
        <strain>ATCC BAA-98 / CGA009</strain>
    </source>
</reference>
<gene>
    <name type="ordered locus">RPA4527</name>
</gene>
<comment type="function">
    <text evidence="1">Nucleoside triphosphate pyrophosphatase that hydrolyzes dTTP and UTP. May have a dual role in cell division arrest and in preventing the incorporation of modified nucleotides into cellular nucleic acids.</text>
</comment>
<comment type="catalytic activity">
    <reaction evidence="1">
        <text>dTTP + H2O = dTMP + diphosphate + H(+)</text>
        <dbReference type="Rhea" id="RHEA:28534"/>
        <dbReference type="ChEBI" id="CHEBI:15377"/>
        <dbReference type="ChEBI" id="CHEBI:15378"/>
        <dbReference type="ChEBI" id="CHEBI:33019"/>
        <dbReference type="ChEBI" id="CHEBI:37568"/>
        <dbReference type="ChEBI" id="CHEBI:63528"/>
        <dbReference type="EC" id="3.6.1.9"/>
    </reaction>
</comment>
<comment type="catalytic activity">
    <reaction evidence="1">
        <text>UTP + H2O = UMP + diphosphate + H(+)</text>
        <dbReference type="Rhea" id="RHEA:29395"/>
        <dbReference type="ChEBI" id="CHEBI:15377"/>
        <dbReference type="ChEBI" id="CHEBI:15378"/>
        <dbReference type="ChEBI" id="CHEBI:33019"/>
        <dbReference type="ChEBI" id="CHEBI:46398"/>
        <dbReference type="ChEBI" id="CHEBI:57865"/>
        <dbReference type="EC" id="3.6.1.9"/>
    </reaction>
</comment>
<comment type="cofactor">
    <cofactor evidence="1">
        <name>a divalent metal cation</name>
        <dbReference type="ChEBI" id="CHEBI:60240"/>
    </cofactor>
</comment>
<comment type="subcellular location">
    <subcellularLocation>
        <location evidence="1">Cytoplasm</location>
    </subcellularLocation>
</comment>
<comment type="similarity">
    <text evidence="1">Belongs to the Maf family. YhdE subfamily.</text>
</comment>
<comment type="sequence caution" evidence="2">
    <conflict type="erroneous initiation">
        <sequence resource="EMBL-CDS" id="CAE29967"/>
    </conflict>
</comment>
<name>NTPPA_RHOPA</name>
<organism>
    <name type="scientific">Rhodopseudomonas palustris (strain ATCC BAA-98 / CGA009)</name>
    <dbReference type="NCBI Taxonomy" id="258594"/>
    <lineage>
        <taxon>Bacteria</taxon>
        <taxon>Pseudomonadati</taxon>
        <taxon>Pseudomonadota</taxon>
        <taxon>Alphaproteobacteria</taxon>
        <taxon>Hyphomicrobiales</taxon>
        <taxon>Nitrobacteraceae</taxon>
        <taxon>Rhodopseudomonas</taxon>
    </lineage>
</organism>
<dbReference type="EC" id="3.6.1.9" evidence="1"/>
<dbReference type="EMBL" id="BX572607">
    <property type="protein sequence ID" value="CAE29967.1"/>
    <property type="status" value="ALT_INIT"/>
    <property type="molecule type" value="Genomic_DNA"/>
</dbReference>
<dbReference type="RefSeq" id="WP_012497704.1">
    <property type="nucleotide sequence ID" value="NZ_CP116810.1"/>
</dbReference>
<dbReference type="SMR" id="Q6N181"/>
<dbReference type="STRING" id="258594.RPA4527"/>
<dbReference type="eggNOG" id="COG0424">
    <property type="taxonomic scope" value="Bacteria"/>
</dbReference>
<dbReference type="HOGENOM" id="CLU_040416_2_0_5"/>
<dbReference type="PhylomeDB" id="Q6N181"/>
<dbReference type="GO" id="GO:0005737">
    <property type="term" value="C:cytoplasm"/>
    <property type="evidence" value="ECO:0007669"/>
    <property type="project" value="UniProtKB-SubCell"/>
</dbReference>
<dbReference type="GO" id="GO:0036218">
    <property type="term" value="F:dTTP diphosphatase activity"/>
    <property type="evidence" value="ECO:0007669"/>
    <property type="project" value="RHEA"/>
</dbReference>
<dbReference type="GO" id="GO:0036221">
    <property type="term" value="F:UTP diphosphatase activity"/>
    <property type="evidence" value="ECO:0007669"/>
    <property type="project" value="RHEA"/>
</dbReference>
<dbReference type="GO" id="GO:0009117">
    <property type="term" value="P:nucleotide metabolic process"/>
    <property type="evidence" value="ECO:0007669"/>
    <property type="project" value="UniProtKB-KW"/>
</dbReference>
<dbReference type="CDD" id="cd00555">
    <property type="entry name" value="Maf"/>
    <property type="match status" value="1"/>
</dbReference>
<dbReference type="FunFam" id="3.90.950.10:FF:000005">
    <property type="entry name" value="7-methyl-GTP pyrophosphatase"/>
    <property type="match status" value="1"/>
</dbReference>
<dbReference type="Gene3D" id="3.90.950.10">
    <property type="match status" value="1"/>
</dbReference>
<dbReference type="HAMAP" id="MF_00528">
    <property type="entry name" value="Maf"/>
    <property type="match status" value="1"/>
</dbReference>
<dbReference type="InterPro" id="IPR029001">
    <property type="entry name" value="ITPase-like_fam"/>
</dbReference>
<dbReference type="InterPro" id="IPR003697">
    <property type="entry name" value="Maf-like"/>
</dbReference>
<dbReference type="NCBIfam" id="TIGR00172">
    <property type="entry name" value="maf"/>
    <property type="match status" value="1"/>
</dbReference>
<dbReference type="NCBIfam" id="NF002401">
    <property type="entry name" value="PRK01441.1"/>
    <property type="match status" value="1"/>
</dbReference>
<dbReference type="PANTHER" id="PTHR43213">
    <property type="entry name" value="BIFUNCTIONAL DTTP/UTP PYROPHOSPHATASE/METHYLTRANSFERASE PROTEIN-RELATED"/>
    <property type="match status" value="1"/>
</dbReference>
<dbReference type="PANTHER" id="PTHR43213:SF5">
    <property type="entry name" value="BIFUNCTIONAL DTTP_UTP PYROPHOSPHATASE_METHYLTRANSFERASE PROTEIN-RELATED"/>
    <property type="match status" value="1"/>
</dbReference>
<dbReference type="Pfam" id="PF02545">
    <property type="entry name" value="Maf"/>
    <property type="match status" value="1"/>
</dbReference>
<dbReference type="PIRSF" id="PIRSF006305">
    <property type="entry name" value="Maf"/>
    <property type="match status" value="1"/>
</dbReference>
<dbReference type="SUPFAM" id="SSF52972">
    <property type="entry name" value="ITPase-like"/>
    <property type="match status" value="1"/>
</dbReference>
<protein>
    <recommendedName>
        <fullName evidence="1">dTTP/UTP pyrophosphatase</fullName>
        <shortName evidence="1">dTTPase/UTPase</shortName>
        <ecNumber evidence="1">3.6.1.9</ecNumber>
    </recommendedName>
    <alternativeName>
        <fullName evidence="1">Nucleoside triphosphate pyrophosphatase</fullName>
    </alternativeName>
    <alternativeName>
        <fullName evidence="1">Nucleotide pyrophosphatase</fullName>
        <shortName evidence="1">Nucleotide PPase</shortName>
    </alternativeName>
</protein>
<accession>Q6N181</accession>